<reference key="1">
    <citation type="journal article" date="2002" name="Proc. Natl. Acad. Sci. U.S.A.">
        <title>The genome sequence of the facultative intracellular pathogen Brucella melitensis.</title>
        <authorList>
            <person name="DelVecchio V.G."/>
            <person name="Kapatral V."/>
            <person name="Redkar R.J."/>
            <person name="Patra G."/>
            <person name="Mujer C."/>
            <person name="Los T."/>
            <person name="Ivanova N."/>
            <person name="Anderson I."/>
            <person name="Bhattacharyya A."/>
            <person name="Lykidis A."/>
            <person name="Reznik G."/>
            <person name="Jablonski L."/>
            <person name="Larsen N."/>
            <person name="D'Souza M."/>
            <person name="Bernal A."/>
            <person name="Mazur M."/>
            <person name="Goltsman E."/>
            <person name="Selkov E."/>
            <person name="Elzer P.H."/>
            <person name="Hagius S."/>
            <person name="O'Callaghan D."/>
            <person name="Letesson J.-J."/>
            <person name="Haselkorn R."/>
            <person name="Kyrpides N.C."/>
            <person name="Overbeek R."/>
        </authorList>
    </citation>
    <scope>NUCLEOTIDE SEQUENCE [LARGE SCALE GENOMIC DNA]</scope>
    <source>
        <strain>ATCC 23456 / CCUG 17765 / NCTC 10094 / 16M</strain>
    </source>
</reference>
<gene>
    <name evidence="1" type="primary">purC</name>
    <name type="ordered locus">BMEI1122</name>
</gene>
<name>PUR7_BRUME</name>
<evidence type="ECO:0000255" key="1">
    <source>
        <dbReference type="HAMAP-Rule" id="MF_00137"/>
    </source>
</evidence>
<dbReference type="EC" id="6.3.2.6" evidence="1"/>
<dbReference type="EMBL" id="AE008917">
    <property type="protein sequence ID" value="AAL52303.1"/>
    <property type="molecule type" value="Genomic_DNA"/>
</dbReference>
<dbReference type="PIR" id="AD3392">
    <property type="entry name" value="AD3392"/>
</dbReference>
<dbReference type="RefSeq" id="WP_002963974.1">
    <property type="nucleotide sequence ID" value="NZ_GG703778.1"/>
</dbReference>
<dbReference type="SMR" id="Q8YGN6"/>
<dbReference type="GeneID" id="29593967"/>
<dbReference type="KEGG" id="bme:BMEI1122"/>
<dbReference type="KEGG" id="bmel:DK63_292"/>
<dbReference type="PATRIC" id="fig|224914.52.peg.301"/>
<dbReference type="eggNOG" id="COG0152">
    <property type="taxonomic scope" value="Bacteria"/>
</dbReference>
<dbReference type="PhylomeDB" id="Q8YGN6"/>
<dbReference type="UniPathway" id="UPA00074">
    <property type="reaction ID" value="UER00131"/>
</dbReference>
<dbReference type="Proteomes" id="UP000000419">
    <property type="component" value="Chromosome I"/>
</dbReference>
<dbReference type="GO" id="GO:0005829">
    <property type="term" value="C:cytosol"/>
    <property type="evidence" value="ECO:0007669"/>
    <property type="project" value="TreeGrafter"/>
</dbReference>
<dbReference type="GO" id="GO:0005524">
    <property type="term" value="F:ATP binding"/>
    <property type="evidence" value="ECO:0007669"/>
    <property type="project" value="UniProtKB-KW"/>
</dbReference>
<dbReference type="GO" id="GO:0004639">
    <property type="term" value="F:phosphoribosylaminoimidazolesuccinocarboxamide synthase activity"/>
    <property type="evidence" value="ECO:0007669"/>
    <property type="project" value="UniProtKB-UniRule"/>
</dbReference>
<dbReference type="GO" id="GO:0006189">
    <property type="term" value="P:'de novo' IMP biosynthetic process"/>
    <property type="evidence" value="ECO:0007669"/>
    <property type="project" value="UniProtKB-UniRule"/>
</dbReference>
<dbReference type="GO" id="GO:0009236">
    <property type="term" value="P:cobalamin biosynthetic process"/>
    <property type="evidence" value="ECO:0007669"/>
    <property type="project" value="InterPro"/>
</dbReference>
<dbReference type="CDD" id="cd01415">
    <property type="entry name" value="SAICAR_synt_PurC"/>
    <property type="match status" value="1"/>
</dbReference>
<dbReference type="FunFam" id="3.30.470.20:FF:000006">
    <property type="entry name" value="Phosphoribosylaminoimidazole-succinocarboxamide synthase"/>
    <property type="match status" value="1"/>
</dbReference>
<dbReference type="Gene3D" id="3.30.470.20">
    <property type="entry name" value="ATP-grasp fold, B domain"/>
    <property type="match status" value="1"/>
</dbReference>
<dbReference type="Gene3D" id="3.30.200.20">
    <property type="entry name" value="Phosphorylase Kinase, domain 1"/>
    <property type="match status" value="1"/>
</dbReference>
<dbReference type="HAMAP" id="MF_00137">
    <property type="entry name" value="SAICAR_synth"/>
    <property type="match status" value="1"/>
</dbReference>
<dbReference type="InterPro" id="IPR028923">
    <property type="entry name" value="SAICAR_synt/ADE2_N"/>
</dbReference>
<dbReference type="InterPro" id="IPR033934">
    <property type="entry name" value="SAICAR_synt_PurC"/>
</dbReference>
<dbReference type="InterPro" id="IPR001636">
    <property type="entry name" value="SAICAR_synth"/>
</dbReference>
<dbReference type="InterPro" id="IPR050089">
    <property type="entry name" value="SAICAR_synthetase"/>
</dbReference>
<dbReference type="InterPro" id="IPR018236">
    <property type="entry name" value="SAICAR_synthetase_CS"/>
</dbReference>
<dbReference type="NCBIfam" id="TIGR00081">
    <property type="entry name" value="purC"/>
    <property type="match status" value="1"/>
</dbReference>
<dbReference type="PANTHER" id="PTHR43599">
    <property type="entry name" value="MULTIFUNCTIONAL PROTEIN ADE2"/>
    <property type="match status" value="1"/>
</dbReference>
<dbReference type="PANTHER" id="PTHR43599:SF3">
    <property type="entry name" value="SI:DKEY-6E2.2"/>
    <property type="match status" value="1"/>
</dbReference>
<dbReference type="Pfam" id="PF01259">
    <property type="entry name" value="SAICAR_synt"/>
    <property type="match status" value="1"/>
</dbReference>
<dbReference type="SUPFAM" id="SSF56104">
    <property type="entry name" value="SAICAR synthase-like"/>
    <property type="match status" value="1"/>
</dbReference>
<dbReference type="PROSITE" id="PS01057">
    <property type="entry name" value="SAICAR_SYNTHETASE_1"/>
    <property type="match status" value="1"/>
</dbReference>
<sequence length="254" mass="28937">MNRRRRIYEGKAKILYEGPEPGTLVQFFKDDATAFNAKKHEVIDGKGVLNNRISEHIFTQLNRIGIPTHFIRRLNMREQLIKEVEIIPLEVVVRNVAAGSLAKHLGLEEGTILPRSIIEFYYKADALDDPMVTEEHITAFGWASPQEIDDIMALAIRVNDFLTGLFLGIGIQLVDFKMECGRLWEGDMMRIVVADEISPDSARLWDITTNDKLDKDRFRRDMGGLVEAYQEVARRLGIMNENDTPRPSGPTLVK</sequence>
<feature type="chain" id="PRO_0000100809" description="Phosphoribosylaminoimidazole-succinocarboxamide synthase">
    <location>
        <begin position="1"/>
        <end position="254"/>
    </location>
</feature>
<comment type="catalytic activity">
    <reaction evidence="1">
        <text>5-amino-1-(5-phospho-D-ribosyl)imidazole-4-carboxylate + L-aspartate + ATP = (2S)-2-[5-amino-1-(5-phospho-beta-D-ribosyl)imidazole-4-carboxamido]succinate + ADP + phosphate + 2 H(+)</text>
        <dbReference type="Rhea" id="RHEA:22628"/>
        <dbReference type="ChEBI" id="CHEBI:15378"/>
        <dbReference type="ChEBI" id="CHEBI:29991"/>
        <dbReference type="ChEBI" id="CHEBI:30616"/>
        <dbReference type="ChEBI" id="CHEBI:43474"/>
        <dbReference type="ChEBI" id="CHEBI:58443"/>
        <dbReference type="ChEBI" id="CHEBI:77657"/>
        <dbReference type="ChEBI" id="CHEBI:456216"/>
        <dbReference type="EC" id="6.3.2.6"/>
    </reaction>
</comment>
<comment type="pathway">
    <text evidence="1">Purine metabolism; IMP biosynthesis via de novo pathway; 5-amino-1-(5-phospho-D-ribosyl)imidazole-4-carboxamide from 5-amino-1-(5-phospho-D-ribosyl)imidazole-4-carboxylate: step 1/2.</text>
</comment>
<comment type="similarity">
    <text evidence="1">Belongs to the SAICAR synthetase family.</text>
</comment>
<accession>Q8YGN6</accession>
<protein>
    <recommendedName>
        <fullName evidence="1">Phosphoribosylaminoimidazole-succinocarboxamide synthase</fullName>
        <ecNumber evidence="1">6.3.2.6</ecNumber>
    </recommendedName>
    <alternativeName>
        <fullName evidence="1">SAICAR synthetase</fullName>
    </alternativeName>
</protein>
<keyword id="KW-0067">ATP-binding</keyword>
<keyword id="KW-0436">Ligase</keyword>
<keyword id="KW-0547">Nucleotide-binding</keyword>
<keyword id="KW-0658">Purine biosynthesis</keyword>
<organism>
    <name type="scientific">Brucella melitensis biotype 1 (strain ATCC 23456 / CCUG 17765 / NCTC 10094 / 16M)</name>
    <dbReference type="NCBI Taxonomy" id="224914"/>
    <lineage>
        <taxon>Bacteria</taxon>
        <taxon>Pseudomonadati</taxon>
        <taxon>Pseudomonadota</taxon>
        <taxon>Alphaproteobacteria</taxon>
        <taxon>Hyphomicrobiales</taxon>
        <taxon>Brucellaceae</taxon>
        <taxon>Brucella/Ochrobactrum group</taxon>
        <taxon>Brucella</taxon>
    </lineage>
</organism>
<proteinExistence type="inferred from homology"/>